<name>PETD_CHLMO</name>
<accession>P11093</accession>
<gene>
    <name evidence="2" type="primary">petD</name>
</gene>
<dbReference type="EMBL" id="X14503">
    <property type="protein sequence ID" value="CAA32656.1"/>
    <property type="molecule type" value="Genomic_DNA"/>
</dbReference>
<dbReference type="PIR" id="S04089">
    <property type="entry name" value="S04089"/>
</dbReference>
<dbReference type="SMR" id="P11093"/>
<dbReference type="GO" id="GO:0009535">
    <property type="term" value="C:chloroplast thylakoid membrane"/>
    <property type="evidence" value="ECO:0007669"/>
    <property type="project" value="UniProtKB-SubCell"/>
</dbReference>
<dbReference type="GO" id="GO:0045158">
    <property type="term" value="F:electron transporter, transferring electrons within cytochrome b6/f complex of photosystem II activity"/>
    <property type="evidence" value="ECO:0007669"/>
    <property type="project" value="UniProtKB-UniRule"/>
</dbReference>
<dbReference type="GO" id="GO:0045156">
    <property type="term" value="F:electron transporter, transferring electrons within the cyclic electron transport pathway of photosynthesis activity"/>
    <property type="evidence" value="ECO:0007669"/>
    <property type="project" value="InterPro"/>
</dbReference>
<dbReference type="GO" id="GO:0016491">
    <property type="term" value="F:oxidoreductase activity"/>
    <property type="evidence" value="ECO:0007669"/>
    <property type="project" value="InterPro"/>
</dbReference>
<dbReference type="GO" id="GO:0009767">
    <property type="term" value="P:photosynthetic electron transport chain"/>
    <property type="evidence" value="ECO:0007669"/>
    <property type="project" value="InterPro"/>
</dbReference>
<dbReference type="CDD" id="cd00290">
    <property type="entry name" value="cytochrome_b_C"/>
    <property type="match status" value="1"/>
</dbReference>
<dbReference type="FunFam" id="1.10.287.980:FF:000001">
    <property type="entry name" value="Cytochrome b6-f complex subunit 4"/>
    <property type="match status" value="1"/>
</dbReference>
<dbReference type="FunFam" id="1.20.5.510:FF:000002">
    <property type="entry name" value="Cytochrome b6-f complex subunit 4"/>
    <property type="match status" value="1"/>
</dbReference>
<dbReference type="Gene3D" id="1.10.287.980">
    <property type="entry name" value="plastocyanin oxidoreductase"/>
    <property type="match status" value="1"/>
</dbReference>
<dbReference type="Gene3D" id="1.20.5.510">
    <property type="entry name" value="Single helix bin"/>
    <property type="match status" value="1"/>
</dbReference>
<dbReference type="HAMAP" id="MF_01344">
    <property type="entry name" value="Cytb6_f_subIV"/>
    <property type="match status" value="1"/>
</dbReference>
<dbReference type="InterPro" id="IPR005798">
    <property type="entry name" value="Cyt_b/b6_C"/>
</dbReference>
<dbReference type="InterPro" id="IPR036150">
    <property type="entry name" value="Cyt_b/b6_C_sf"/>
</dbReference>
<dbReference type="InterPro" id="IPR005870">
    <property type="entry name" value="Cyt_b6/f_cplx_suIV"/>
</dbReference>
<dbReference type="InterPro" id="IPR048260">
    <property type="entry name" value="Cytochrome_b_C_euk/bac"/>
</dbReference>
<dbReference type="NCBIfam" id="TIGR01156">
    <property type="entry name" value="cytb6_f_IV"/>
    <property type="match status" value="1"/>
</dbReference>
<dbReference type="PANTHER" id="PTHR19271">
    <property type="entry name" value="CYTOCHROME B"/>
    <property type="match status" value="1"/>
</dbReference>
<dbReference type="PANTHER" id="PTHR19271:SF16">
    <property type="entry name" value="CYTOCHROME B"/>
    <property type="match status" value="1"/>
</dbReference>
<dbReference type="Pfam" id="PF00032">
    <property type="entry name" value="Cytochrom_B_C"/>
    <property type="match status" value="1"/>
</dbReference>
<dbReference type="PIRSF" id="PIRSF000033">
    <property type="entry name" value="B6f_17K"/>
    <property type="match status" value="1"/>
</dbReference>
<dbReference type="SUPFAM" id="SSF81648">
    <property type="entry name" value="a domain/subunit of cytochrome bc1 complex (Ubiquinol-cytochrome c reductase)"/>
    <property type="match status" value="1"/>
</dbReference>
<dbReference type="PROSITE" id="PS51003">
    <property type="entry name" value="CYTB_CTER"/>
    <property type="match status" value="1"/>
</dbReference>
<feature type="chain" id="PRO_0000061850" description="Cytochrome b6-f complex subunit 4">
    <location>
        <begin position="1"/>
        <end position="160"/>
    </location>
</feature>
<feature type="transmembrane region" description="Helical" evidence="2">
    <location>
        <begin position="36"/>
        <end position="56"/>
    </location>
</feature>
<feature type="transmembrane region" description="Helical" evidence="2">
    <location>
        <begin position="95"/>
        <end position="115"/>
    </location>
</feature>
<feature type="transmembrane region" description="Helical" evidence="2">
    <location>
        <begin position="131"/>
        <end position="151"/>
    </location>
</feature>
<keyword id="KW-0150">Chloroplast</keyword>
<keyword id="KW-0249">Electron transport</keyword>
<keyword id="KW-0472">Membrane</keyword>
<keyword id="KW-0602">Photosynthesis</keyword>
<keyword id="KW-0934">Plastid</keyword>
<keyword id="KW-0793">Thylakoid</keyword>
<keyword id="KW-0812">Transmembrane</keyword>
<keyword id="KW-1133">Transmembrane helix</keyword>
<keyword id="KW-0813">Transport</keyword>
<reference key="1">
    <citation type="journal article" date="1989" name="Nucleic Acids Res.">
        <title>Nucleotide sequence of the chloroplast petD gene of Chlamydomonas eugametos.</title>
        <authorList>
            <person name="Turmel M."/>
            <person name="Boulanger J."/>
            <person name="Bergeron A."/>
        </authorList>
    </citation>
    <scope>NUCLEOTIDE SEQUENCE [GENOMIC DNA]</scope>
    <source>
        <strain>UTEX 9</strain>
    </source>
</reference>
<organism>
    <name type="scientific">Chlamydomonas moewusii</name>
    <name type="common">Chlamydomonas eugametos</name>
    <dbReference type="NCBI Taxonomy" id="3054"/>
    <lineage>
        <taxon>Eukaryota</taxon>
        <taxon>Viridiplantae</taxon>
        <taxon>Chlorophyta</taxon>
        <taxon>core chlorophytes</taxon>
        <taxon>Chlorophyceae</taxon>
        <taxon>CS clade</taxon>
        <taxon>Chlamydomonadales</taxon>
        <taxon>Chlamydomonadaceae</taxon>
        <taxon>Chlamydomonas</taxon>
    </lineage>
</organism>
<evidence type="ECO:0000250" key="1"/>
<evidence type="ECO:0000255" key="2">
    <source>
        <dbReference type="HAMAP-Rule" id="MF_01344"/>
    </source>
</evidence>
<protein>
    <recommendedName>
        <fullName evidence="2">Cytochrome b6-f complex subunit 4</fullName>
    </recommendedName>
    <alternativeName>
        <fullName evidence="2">17 kDa polypeptide</fullName>
    </alternativeName>
</protein>
<sequence length="160" mass="17475">MSVTKKPDLNDPVLRAKLAKGFGHNTYGEPAWPNDLLYIFPVVIFGTFACCIGLAVLDPAAMGEPANPFATPLEILPEWYFYPVFQILRTVPNKLLGVLAMAAVPVGLLTVPFIESINKFQNPYRRPIATILFLVGTLVAVWLGIGATFPIDISLTLGLF</sequence>
<comment type="function">
    <text evidence="2">Component of the cytochrome b6-f complex, which mediates electron transfer between photosystem II (PSII) and photosystem I (PSI), cyclic electron flow around PSI, and state transitions.</text>
</comment>
<comment type="subunit">
    <text evidence="1">The 4 large subunits of the cytochrome b6-f complex are cytochrome b6, subunit IV (17 kDa polypeptide, petD), cytochrome f and the Rieske protein, while the 4 small subunits are petG, petL, petM and petN. The complex functions as a dimer (By similarity).</text>
</comment>
<comment type="subcellular location">
    <subcellularLocation>
        <location evidence="2">Plastid</location>
        <location evidence="2">Chloroplast thylakoid membrane</location>
        <topology evidence="2">Multi-pass membrane protein</topology>
    </subcellularLocation>
</comment>
<comment type="similarity">
    <text evidence="2">Belongs to the cytochrome b family. PetD subfamily.</text>
</comment>
<proteinExistence type="inferred from homology"/>
<geneLocation type="chloroplast"/>